<dbReference type="EMBL" id="CP000390">
    <property type="protein sequence ID" value="ABG62777.1"/>
    <property type="molecule type" value="Genomic_DNA"/>
</dbReference>
<dbReference type="SMR" id="Q11IJ8"/>
<dbReference type="STRING" id="266779.Meso_1381"/>
<dbReference type="KEGG" id="mes:Meso_1381"/>
<dbReference type="eggNOG" id="COG0052">
    <property type="taxonomic scope" value="Bacteria"/>
</dbReference>
<dbReference type="HOGENOM" id="CLU_040318_2_1_5"/>
<dbReference type="OrthoDB" id="9808036at2"/>
<dbReference type="GO" id="GO:0022627">
    <property type="term" value="C:cytosolic small ribosomal subunit"/>
    <property type="evidence" value="ECO:0007669"/>
    <property type="project" value="TreeGrafter"/>
</dbReference>
<dbReference type="GO" id="GO:0003735">
    <property type="term" value="F:structural constituent of ribosome"/>
    <property type="evidence" value="ECO:0007669"/>
    <property type="project" value="InterPro"/>
</dbReference>
<dbReference type="GO" id="GO:0006412">
    <property type="term" value="P:translation"/>
    <property type="evidence" value="ECO:0007669"/>
    <property type="project" value="UniProtKB-UniRule"/>
</dbReference>
<dbReference type="CDD" id="cd01425">
    <property type="entry name" value="RPS2"/>
    <property type="match status" value="1"/>
</dbReference>
<dbReference type="FunFam" id="1.10.287.610:FF:000001">
    <property type="entry name" value="30S ribosomal protein S2"/>
    <property type="match status" value="1"/>
</dbReference>
<dbReference type="Gene3D" id="3.40.50.10490">
    <property type="entry name" value="Glucose-6-phosphate isomerase like protein, domain 1"/>
    <property type="match status" value="1"/>
</dbReference>
<dbReference type="Gene3D" id="1.10.287.610">
    <property type="entry name" value="Helix hairpin bin"/>
    <property type="match status" value="1"/>
</dbReference>
<dbReference type="HAMAP" id="MF_00291_B">
    <property type="entry name" value="Ribosomal_uS2_B"/>
    <property type="match status" value="1"/>
</dbReference>
<dbReference type="InterPro" id="IPR001865">
    <property type="entry name" value="Ribosomal_uS2"/>
</dbReference>
<dbReference type="InterPro" id="IPR005706">
    <property type="entry name" value="Ribosomal_uS2_bac/mit/plastid"/>
</dbReference>
<dbReference type="InterPro" id="IPR018130">
    <property type="entry name" value="Ribosomal_uS2_CS"/>
</dbReference>
<dbReference type="InterPro" id="IPR023591">
    <property type="entry name" value="Ribosomal_uS2_flav_dom_sf"/>
</dbReference>
<dbReference type="NCBIfam" id="TIGR01011">
    <property type="entry name" value="rpsB_bact"/>
    <property type="match status" value="1"/>
</dbReference>
<dbReference type="PANTHER" id="PTHR12534">
    <property type="entry name" value="30S RIBOSOMAL PROTEIN S2 PROKARYOTIC AND ORGANELLAR"/>
    <property type="match status" value="1"/>
</dbReference>
<dbReference type="PANTHER" id="PTHR12534:SF0">
    <property type="entry name" value="SMALL RIBOSOMAL SUBUNIT PROTEIN US2M"/>
    <property type="match status" value="1"/>
</dbReference>
<dbReference type="Pfam" id="PF00318">
    <property type="entry name" value="Ribosomal_S2"/>
    <property type="match status" value="1"/>
</dbReference>
<dbReference type="PRINTS" id="PR00395">
    <property type="entry name" value="RIBOSOMALS2"/>
</dbReference>
<dbReference type="SUPFAM" id="SSF52313">
    <property type="entry name" value="Ribosomal protein S2"/>
    <property type="match status" value="1"/>
</dbReference>
<dbReference type="PROSITE" id="PS00962">
    <property type="entry name" value="RIBOSOMAL_S2_1"/>
    <property type="match status" value="1"/>
</dbReference>
<dbReference type="PROSITE" id="PS00963">
    <property type="entry name" value="RIBOSOMAL_S2_2"/>
    <property type="match status" value="1"/>
</dbReference>
<feature type="chain" id="PRO_1000003997" description="Small ribosomal subunit protein uS2">
    <location>
        <begin position="1"/>
        <end position="267"/>
    </location>
</feature>
<feature type="region of interest" description="Disordered" evidence="2">
    <location>
        <begin position="237"/>
        <end position="267"/>
    </location>
</feature>
<feature type="compositionally biased region" description="Low complexity" evidence="2">
    <location>
        <begin position="238"/>
        <end position="261"/>
    </location>
</feature>
<accession>Q11IJ8</accession>
<sequence>MALPDFSMRQLLEAGVHFGHQTHRWNPKMTPYIFGERNNIHIIDLSQTVPLLHQALKVVSDTVGRGGRLLFVGTKRQASDIVADAARRSAQYYVNSRWLGGMLTNWKTISNSIQRLRRLDEMLSSENLGLTKKERLNLERERDKLERALGGIRDMGSTPDMMFVIDTNKEAIAVQEARRLGIPVIAVIDSNCDPDVVDYPIPGNDDAARAIALYCDLIAKAAIDGIERQQGSLGVDIGESAAAPSEPALETASAEATAEGEQPGSQA</sequence>
<comment type="similarity">
    <text evidence="1">Belongs to the universal ribosomal protein uS2 family.</text>
</comment>
<reference key="1">
    <citation type="submission" date="2006-06" db="EMBL/GenBank/DDBJ databases">
        <title>Complete sequence of chromosome of Mesorhizobium sp. BNC1.</title>
        <authorList>
            <consortium name="US DOE Joint Genome Institute"/>
            <person name="Copeland A."/>
            <person name="Lucas S."/>
            <person name="Lapidus A."/>
            <person name="Barry K."/>
            <person name="Detter J.C."/>
            <person name="Glavina del Rio T."/>
            <person name="Hammon N."/>
            <person name="Israni S."/>
            <person name="Dalin E."/>
            <person name="Tice H."/>
            <person name="Pitluck S."/>
            <person name="Chertkov O."/>
            <person name="Brettin T."/>
            <person name="Bruce D."/>
            <person name="Han C."/>
            <person name="Tapia R."/>
            <person name="Gilna P."/>
            <person name="Schmutz J."/>
            <person name="Larimer F."/>
            <person name="Land M."/>
            <person name="Hauser L."/>
            <person name="Kyrpides N."/>
            <person name="Mikhailova N."/>
            <person name="Richardson P."/>
        </authorList>
    </citation>
    <scope>NUCLEOTIDE SEQUENCE [LARGE SCALE GENOMIC DNA]</scope>
    <source>
        <strain>BNC1</strain>
    </source>
</reference>
<evidence type="ECO:0000255" key="1">
    <source>
        <dbReference type="HAMAP-Rule" id="MF_00291"/>
    </source>
</evidence>
<evidence type="ECO:0000256" key="2">
    <source>
        <dbReference type="SAM" id="MobiDB-lite"/>
    </source>
</evidence>
<evidence type="ECO:0000305" key="3"/>
<name>RS2_CHESB</name>
<gene>
    <name evidence="1" type="primary">rpsB</name>
    <name type="ordered locus">Meso_1381</name>
</gene>
<keyword id="KW-0687">Ribonucleoprotein</keyword>
<keyword id="KW-0689">Ribosomal protein</keyword>
<organism>
    <name type="scientific">Chelativorans sp. (strain BNC1)</name>
    <dbReference type="NCBI Taxonomy" id="266779"/>
    <lineage>
        <taxon>Bacteria</taxon>
        <taxon>Pseudomonadati</taxon>
        <taxon>Pseudomonadota</taxon>
        <taxon>Alphaproteobacteria</taxon>
        <taxon>Hyphomicrobiales</taxon>
        <taxon>Phyllobacteriaceae</taxon>
        <taxon>Chelativorans</taxon>
    </lineage>
</organism>
<protein>
    <recommendedName>
        <fullName evidence="1">Small ribosomal subunit protein uS2</fullName>
    </recommendedName>
    <alternativeName>
        <fullName evidence="3">30S ribosomal protein S2</fullName>
    </alternativeName>
</protein>
<proteinExistence type="inferred from homology"/>